<keyword id="KW-0413">Isomerase</keyword>
<keyword id="KW-0819">tRNA processing</keyword>
<organism>
    <name type="scientific">Burkholderia vietnamiensis (strain G4 / LMG 22486)</name>
    <name type="common">Burkholderia cepacia (strain R1808)</name>
    <dbReference type="NCBI Taxonomy" id="269482"/>
    <lineage>
        <taxon>Bacteria</taxon>
        <taxon>Pseudomonadati</taxon>
        <taxon>Pseudomonadota</taxon>
        <taxon>Betaproteobacteria</taxon>
        <taxon>Burkholderiales</taxon>
        <taxon>Burkholderiaceae</taxon>
        <taxon>Burkholderia</taxon>
        <taxon>Burkholderia cepacia complex</taxon>
    </lineage>
</organism>
<comment type="function">
    <text evidence="1">Formation of pseudouridine at positions 38, 39 and 40 in the anticodon stem and loop of transfer RNAs.</text>
</comment>
<comment type="catalytic activity">
    <reaction evidence="1">
        <text>uridine(38/39/40) in tRNA = pseudouridine(38/39/40) in tRNA</text>
        <dbReference type="Rhea" id="RHEA:22376"/>
        <dbReference type="Rhea" id="RHEA-COMP:10085"/>
        <dbReference type="Rhea" id="RHEA-COMP:10087"/>
        <dbReference type="ChEBI" id="CHEBI:65314"/>
        <dbReference type="ChEBI" id="CHEBI:65315"/>
        <dbReference type="EC" id="5.4.99.12"/>
    </reaction>
</comment>
<comment type="subunit">
    <text evidence="1">Homodimer.</text>
</comment>
<comment type="similarity">
    <text evidence="1">Belongs to the tRNA pseudouridine synthase TruA family.</text>
</comment>
<name>TRUA_BURVG</name>
<feature type="chain" id="PRO_1000017060" description="tRNA pseudouridine synthase A">
    <location>
        <begin position="1"/>
        <end position="270"/>
    </location>
</feature>
<feature type="active site" description="Nucleophile" evidence="1">
    <location>
        <position position="51"/>
    </location>
</feature>
<feature type="binding site" evidence="1">
    <location>
        <position position="109"/>
    </location>
    <ligand>
        <name>substrate</name>
    </ligand>
</feature>
<sequence>MRIALGVQYDGAAFCGWQAQPHGKTVQDALERALGEFACVPLHTTVAGRTDTGVHGLGQVVHFDTALDRAEFSWVRGTNAFLPPTVSVQWAKAMPDTFHARFSAFERTYYYALYVHPVRSPMLAGRAGWIHTPLDDDAMRAAAVHLIGEHDFSSFRSSECQSKTPVKHLYQIDVRRSGHFIHFRFRANAFLHHMVRNLMGCLVAVGRGRYPADWLADVLAGRDRNLAAPTFMADGLYLAHVGYPAEFAVPPAQLGSVPWSSVWADLDPQP</sequence>
<dbReference type="EC" id="5.4.99.12" evidence="1"/>
<dbReference type="EMBL" id="CP000615">
    <property type="protein sequence ID" value="ABO57425.1"/>
    <property type="molecule type" value="Genomic_DNA"/>
</dbReference>
<dbReference type="SMR" id="A4JMC2"/>
<dbReference type="KEGG" id="bvi:Bcep1808_4460"/>
<dbReference type="eggNOG" id="COG0101">
    <property type="taxonomic scope" value="Bacteria"/>
</dbReference>
<dbReference type="HOGENOM" id="CLU_014673_0_2_4"/>
<dbReference type="Proteomes" id="UP000002287">
    <property type="component" value="Chromosome 2"/>
</dbReference>
<dbReference type="GO" id="GO:0003723">
    <property type="term" value="F:RNA binding"/>
    <property type="evidence" value="ECO:0007669"/>
    <property type="project" value="InterPro"/>
</dbReference>
<dbReference type="GO" id="GO:0160147">
    <property type="term" value="F:tRNA pseudouridine(38-40) synthase activity"/>
    <property type="evidence" value="ECO:0007669"/>
    <property type="project" value="UniProtKB-EC"/>
</dbReference>
<dbReference type="GO" id="GO:0031119">
    <property type="term" value="P:tRNA pseudouridine synthesis"/>
    <property type="evidence" value="ECO:0007669"/>
    <property type="project" value="UniProtKB-UniRule"/>
</dbReference>
<dbReference type="CDD" id="cd02570">
    <property type="entry name" value="PseudoU_synth_EcTruA"/>
    <property type="match status" value="1"/>
</dbReference>
<dbReference type="FunFam" id="3.30.70.580:FF:000001">
    <property type="entry name" value="tRNA pseudouridine synthase A"/>
    <property type="match status" value="1"/>
</dbReference>
<dbReference type="Gene3D" id="3.30.70.660">
    <property type="entry name" value="Pseudouridine synthase I, catalytic domain, C-terminal subdomain"/>
    <property type="match status" value="1"/>
</dbReference>
<dbReference type="Gene3D" id="3.30.70.580">
    <property type="entry name" value="Pseudouridine synthase I, catalytic domain, N-terminal subdomain"/>
    <property type="match status" value="1"/>
</dbReference>
<dbReference type="HAMAP" id="MF_00171">
    <property type="entry name" value="TruA"/>
    <property type="match status" value="1"/>
</dbReference>
<dbReference type="InterPro" id="IPR020103">
    <property type="entry name" value="PsdUridine_synth_cat_dom_sf"/>
</dbReference>
<dbReference type="InterPro" id="IPR001406">
    <property type="entry name" value="PsdUridine_synth_TruA"/>
</dbReference>
<dbReference type="InterPro" id="IPR020097">
    <property type="entry name" value="PsdUridine_synth_TruA_a/b_dom"/>
</dbReference>
<dbReference type="InterPro" id="IPR020095">
    <property type="entry name" value="PsdUridine_synth_TruA_C"/>
</dbReference>
<dbReference type="InterPro" id="IPR020094">
    <property type="entry name" value="TruA/RsuA/RluB/E/F_N"/>
</dbReference>
<dbReference type="NCBIfam" id="TIGR00071">
    <property type="entry name" value="hisT_truA"/>
    <property type="match status" value="1"/>
</dbReference>
<dbReference type="PANTHER" id="PTHR11142">
    <property type="entry name" value="PSEUDOURIDYLATE SYNTHASE"/>
    <property type="match status" value="1"/>
</dbReference>
<dbReference type="PANTHER" id="PTHR11142:SF0">
    <property type="entry name" value="TRNA PSEUDOURIDINE SYNTHASE-LIKE 1"/>
    <property type="match status" value="1"/>
</dbReference>
<dbReference type="Pfam" id="PF01416">
    <property type="entry name" value="PseudoU_synth_1"/>
    <property type="match status" value="2"/>
</dbReference>
<dbReference type="PIRSF" id="PIRSF001430">
    <property type="entry name" value="tRNA_psdUrid_synth"/>
    <property type="match status" value="1"/>
</dbReference>
<dbReference type="SUPFAM" id="SSF55120">
    <property type="entry name" value="Pseudouridine synthase"/>
    <property type="match status" value="1"/>
</dbReference>
<reference key="1">
    <citation type="submission" date="2007-03" db="EMBL/GenBank/DDBJ databases">
        <title>Complete sequence of chromosome 2 of Burkholderia vietnamiensis G4.</title>
        <authorList>
            <consortium name="US DOE Joint Genome Institute"/>
            <person name="Copeland A."/>
            <person name="Lucas S."/>
            <person name="Lapidus A."/>
            <person name="Barry K."/>
            <person name="Detter J.C."/>
            <person name="Glavina del Rio T."/>
            <person name="Hammon N."/>
            <person name="Israni S."/>
            <person name="Dalin E."/>
            <person name="Tice H."/>
            <person name="Pitluck S."/>
            <person name="Chain P."/>
            <person name="Malfatti S."/>
            <person name="Shin M."/>
            <person name="Vergez L."/>
            <person name="Schmutz J."/>
            <person name="Larimer F."/>
            <person name="Land M."/>
            <person name="Hauser L."/>
            <person name="Kyrpides N."/>
            <person name="Tiedje J."/>
            <person name="Richardson P."/>
        </authorList>
    </citation>
    <scope>NUCLEOTIDE SEQUENCE [LARGE SCALE GENOMIC DNA]</scope>
    <source>
        <strain>G4 / LMG 22486</strain>
    </source>
</reference>
<protein>
    <recommendedName>
        <fullName evidence="1">tRNA pseudouridine synthase A</fullName>
        <ecNumber evidence="1">5.4.99.12</ecNumber>
    </recommendedName>
    <alternativeName>
        <fullName evidence="1">tRNA pseudouridine(38-40) synthase</fullName>
    </alternativeName>
    <alternativeName>
        <fullName evidence="1">tRNA pseudouridylate synthase I</fullName>
    </alternativeName>
    <alternativeName>
        <fullName evidence="1">tRNA-uridine isomerase I</fullName>
    </alternativeName>
</protein>
<gene>
    <name evidence="1" type="primary">truA</name>
    <name type="ordered locus">Bcep1808_4460</name>
</gene>
<evidence type="ECO:0000255" key="1">
    <source>
        <dbReference type="HAMAP-Rule" id="MF_00171"/>
    </source>
</evidence>
<proteinExistence type="inferred from homology"/>
<accession>A4JMC2</accession>